<protein>
    <recommendedName>
        <fullName>Translocator protein BipD</fullName>
    </recommendedName>
</protein>
<evidence type="ECO:0000250" key="1"/>
<evidence type="ECO:0000255" key="2"/>
<evidence type="ECO:0000305" key="3"/>
<gene>
    <name type="primary">bipD</name>
    <name type="ordered locus">BMAA1528</name>
</gene>
<name>BIPD_BURMA</name>
<reference key="1">
    <citation type="journal article" date="2004" name="Proc. Natl. Acad. Sci. U.S.A.">
        <title>Structural flexibility in the Burkholderia mallei genome.</title>
        <authorList>
            <person name="Nierman W.C."/>
            <person name="DeShazer D."/>
            <person name="Kim H.S."/>
            <person name="Tettelin H."/>
            <person name="Nelson K.E."/>
            <person name="Feldblyum T.V."/>
            <person name="Ulrich R.L."/>
            <person name="Ronning C.M."/>
            <person name="Brinkac L.M."/>
            <person name="Daugherty S.C."/>
            <person name="Davidsen T.D."/>
            <person name="DeBoy R.T."/>
            <person name="Dimitrov G."/>
            <person name="Dodson R.J."/>
            <person name="Durkin A.S."/>
            <person name="Gwinn M.L."/>
            <person name="Haft D.H."/>
            <person name="Khouri H.M."/>
            <person name="Kolonay J.F."/>
            <person name="Madupu R."/>
            <person name="Mohammoud Y."/>
            <person name="Nelson W.C."/>
            <person name="Radune D."/>
            <person name="Romero C.M."/>
            <person name="Sarria S."/>
            <person name="Selengut J."/>
            <person name="Shamblin C."/>
            <person name="Sullivan S.A."/>
            <person name="White O."/>
            <person name="Yu Y."/>
            <person name="Zafar N."/>
            <person name="Zhou L."/>
            <person name="Fraser C.M."/>
        </authorList>
    </citation>
    <scope>NUCLEOTIDE SEQUENCE [LARGE SCALE GENOMIC DNA]</scope>
    <source>
        <strain>ATCC 23344</strain>
    </source>
</reference>
<keyword id="KW-0175">Coiled coil</keyword>
<keyword id="KW-1185">Reference proteome</keyword>
<keyword id="KW-0964">Secreted</keyword>
<keyword id="KW-0843">Virulence</keyword>
<dbReference type="EMBL" id="CP000011">
    <property type="protein sequence ID" value="AAU46017.1"/>
    <property type="status" value="ALT_INIT"/>
    <property type="molecule type" value="Genomic_DNA"/>
</dbReference>
<dbReference type="RefSeq" id="WP_004188590.1">
    <property type="nucleotide sequence ID" value="NC_006349.2"/>
</dbReference>
<dbReference type="RefSeq" id="YP_106118.1">
    <property type="nucleotide sequence ID" value="NC_006349.2"/>
</dbReference>
<dbReference type="SMR" id="Q62B10"/>
<dbReference type="GeneID" id="93063709"/>
<dbReference type="KEGG" id="bma:BMAA1528"/>
<dbReference type="PATRIC" id="fig|243160.12.peg.5104"/>
<dbReference type="eggNOG" id="ENOG5032RHE">
    <property type="taxonomic scope" value="Bacteria"/>
</dbReference>
<dbReference type="HOGENOM" id="CLU_893331_0_0_4"/>
<dbReference type="Proteomes" id="UP000006693">
    <property type="component" value="Chromosome 2"/>
</dbReference>
<dbReference type="GO" id="GO:0005576">
    <property type="term" value="C:extracellular region"/>
    <property type="evidence" value="ECO:0007669"/>
    <property type="project" value="UniProtKB-SubCell"/>
</dbReference>
<dbReference type="Gene3D" id="1.20.1710.10">
    <property type="entry name" value="IpaD-like"/>
    <property type="match status" value="1"/>
</dbReference>
<dbReference type="InterPro" id="IPR036708">
    <property type="entry name" value="BipD-like_sf"/>
</dbReference>
<dbReference type="InterPro" id="IPR009483">
    <property type="entry name" value="IpaD/BipD/SipD"/>
</dbReference>
<dbReference type="NCBIfam" id="TIGR02553">
    <property type="entry name" value="SipD_IpaD_SspD"/>
    <property type="match status" value="1"/>
</dbReference>
<dbReference type="Pfam" id="PF06511">
    <property type="entry name" value="T3SS_TC"/>
    <property type="match status" value="1"/>
</dbReference>
<dbReference type="SUPFAM" id="SSF140693">
    <property type="entry name" value="IpaD-like"/>
    <property type="match status" value="1"/>
</dbReference>
<proteinExistence type="inferred from homology"/>
<organism>
    <name type="scientific">Burkholderia mallei (strain ATCC 23344)</name>
    <dbReference type="NCBI Taxonomy" id="243160"/>
    <lineage>
        <taxon>Bacteria</taxon>
        <taxon>Pseudomonadati</taxon>
        <taxon>Pseudomonadota</taxon>
        <taxon>Betaproteobacteria</taxon>
        <taxon>Burkholderiales</taxon>
        <taxon>Burkholderiaceae</taxon>
        <taxon>Burkholderia</taxon>
        <taxon>pseudomallei group</taxon>
    </lineage>
</organism>
<sequence length="310" mass="33975">MNMHVDMGRALTVRDWPALEALAKTMPADAGARAMTDDDLRAAGVDRRVPEQKLGAAIDEFASLRLPDRIDGRFVDGRRANLTVFDDARVAVRGHARAQRNLLERLETELLGGTLDTAGDEGGIQPDPILQGLVDVIGQGKSDIDAYATIVEGLTKYFQSVADVMSKLQDYISAKDDKNMKIDGGKIKALIQQVIDHLPTMQLPKGADIARWRKELGDAVSISDSGVVTINPDKLIKMRDSLPPDGTVWDTARYQAWNTAFSGQKDNIQNDVQTLVEKYSHQNSNFDNLVKVLSGAISTLTDTAKSYLQI</sequence>
<comment type="function">
    <text evidence="1">Required for invasion of epithelial cells, as well as for survival within host cells, escape from endocytic vesicles and subsequent actin-tail formation. Probably regulates the secretion of effectors BipB and BipC and their final integration into the target cell membrane (By similarity).</text>
</comment>
<comment type="subcellular location">
    <subcellularLocation>
        <location evidence="1">Secreted</location>
    </subcellularLocation>
    <text evidence="1">Secreted via the bsa type III secretion system. Localizes to the tip of the external secretion needle that is part of the secretion apparatus (By similarity).</text>
</comment>
<comment type="domain">
    <text evidence="1">The N-terminal domain is an intra-molecular chaperone that prevents premature oligomerization of the residues on the coiled-coil region that are involved in interactions with the needle and/or itself. The residues in the C-terminal domain probably form oligomeric structures at the tip of the needle that are responsible for the regulation of secretion of other effectors (By similarity).</text>
</comment>
<comment type="similarity">
    <text evidence="3">Belongs to the invasin protein D family.</text>
</comment>
<comment type="sequence caution" evidence="3">
    <conflict type="erroneous initiation">
        <sequence resource="EMBL-CDS" id="AAU46017"/>
    </conflict>
</comment>
<accession>Q62B10</accession>
<feature type="chain" id="PRO_0000344005" description="Translocator protein BipD">
    <location>
        <begin position="1"/>
        <end position="310"/>
    </location>
</feature>
<feature type="coiled-coil region" evidence="2">
    <location>
        <begin position="127"/>
        <end position="171"/>
    </location>
</feature>
<feature type="coiled-coil region" evidence="2">
    <location>
        <begin position="250"/>
        <end position="299"/>
    </location>
</feature>